<name>LRP6_MOUSE</name>
<comment type="function">
    <text evidence="2 8">Component of the Wnt-Fzd-LRP5-LRP6 complex that triggers beta-catenin signaling through inducing aggregation of receptor-ligand complexes into ribosome-sized signalosomes. Cell-surface coreceptor of Wnt/beta-catenin signaling, which plays a pivotal role in bone formation. The Wnt-induced Fzd/LRP6 coreceptor complex recruits DVL1 polymers to the plasma membrane which, in turn, recruits the AXIN1/GSK3B-complex to the cell surface promoting the formation of signalosomes and inhibiting AXIN1/GSK3-mediated phosphorylation and destruction of beta-catenin (By similarity). Required for posterior patterning of the epiblast during gastrulation (PubMed:15142971).</text>
</comment>
<comment type="subunit">
    <text evidence="2 6 7 10 11 12 13 14">Homodimer; disulfide-linked (By similarity). Forms phosphorylated oligomer aggregates on Wnt-signaling (By similarity). Component of the Wnt-Fzd-LRP5-LRP6 complex. Interacts (via the extracellular domain) with WNT1; the interaction is enhanced by prior formation of the Wnt/Fzd complex. Interacts (via the beta-propeller regions 3 and 4) with WNT3A. Interacts (via the beta-propeller regions 1 and 2) with WNT9B. Interacts with FZD5; the interaction forms a coreceptor complex for Wnt signaling and is inhibited by DKK1 and DRAXIN. Interacts (via beta propeller region) with DKK1; the interaction inhibits FZD5/LRP6 complex formation. Interacts with DKK2. Interacts (via the phosphorylated PPPSP motifs) with AXIN1; the interaction recruits the AXIN1/GSK3B complex to cell surface LRP6 signalosomes. Interacts (via the extracellular domain) with RSPO1; the interaction activates Wnt/beta-catenin signaling. Interacts (via the extracellular domain) with RSPO3 (via the cysteine rich domain); the interaction activates Wnt/beta-catenin signaling. Interacts (via the beta-propeller regions 1 and 2) with SOST; the interaction competes with DKK1 for binding for inhibiting beta-catenin signaling. Interacts (via the cytoplasmic domain) with CSNKIE; the interaction phosphorylates LRP6, binds AXIN1 and inhibits AXIN1/GSK3B-mediated phosphorylation of beta-catenin (By similarity). Interacts with DRAXIN; the interaction inhibits Wnt signaling. Interacts with GRB10; the interaction prevents AXIN1 binding, thus negatively regulating the Wnt signaling pathway. Interacts with MESD; the interaction prevents the formation of LRP6 aggregates and targets LRP6 to the plasma membrane (PubMed:12581525). Interacts with MACF1. Interacts with DAB2; the interaction involves LRP6 phosphorylation by CK2 and sequesters LRP6 towards clathrin-mediated endocytosis. Interacts with TMEM198 (By similarity). Interacts with CAPRIN2; the interaction promotes LRP6 phosphorylation at Ser-1490 (By similarity). Found in a complex with CAPRIN2, CCNY and CDK14 during G2/M stage; CAPRIN2 functions as a scaffold for the complex by binding to CCNY via its N terminus and to CDK14 via its C terminus. Interacts with LYPD6 (via NxI motif) (By similarity). Forms a ternary complex with DKK1 and KREM1 (By similarity). Interacts with KREM1 in a DKK1-dependent manner (By similarity). Interacts with MDK: this interaction is calcium dependent (PubMed:12573468). Interacts with LMBR1L (PubMed:31073040). Interacts with GPR37; this interaction promotes LRP6 maturation (By similarity).</text>
</comment>
<comment type="subcellular location">
    <subcellularLocation>
        <location evidence="7">Cell membrane</location>
        <topology>Single-pass type I membrane protein</topology>
    </subcellularLocation>
    <subcellularLocation>
        <location evidence="7">Endoplasmic reticulum</location>
    </subcellularLocation>
    <subcellularLocation>
        <location evidence="2">Membrane raft</location>
    </subcellularLocation>
    <text evidence="2 7">On Wnt signaling, undergoes a cycle of caveolin- or clathrin-mediated endocytosis and plasma membrane location. Released from the endoplasmic reticulum on palmitoylation. Mono-ubiquitination retains it in the endoplasmic reticulum in the absence of palmitoylation. On Wnt signaling, phosphorylated, aggregates and colocalizes with AXIN1 and GSK3B at the plasma membrane in LRP6-signalosomes (By similarity). Chaperoned to the plasma membrane by HSP90B1 and MESD (PubMed:12581525).</text>
</comment>
<comment type="tissue specificity">
    <text evidence="8">Expressed in early embryo. Broadly expressed throughout the embryonic ectoderm and in nascent mesoderm, and in endoderm emerging from the primitive streak.</text>
</comment>
<comment type="domain">
    <text evidence="1">The YWTD-EGF-like domains 1 and 2 are required for the interaction with Wnt-frizzled complex. The YWTD-EGF-like domains 3 and 4 are required for the interaction with DKK1 (By similarity).</text>
</comment>
<comment type="domain">
    <text>The PPPSP motifs play a central role in signal transduction by being phosphorylated, leading to activate the Wnt signaling pathway.</text>
</comment>
<comment type="PTM">
    <text evidence="1">Dual phosphorylation of cytoplasmic PPPSP motifs sequentially by GSK3 and CK1 is required for AXIN1-binding, and subsequent stabilization and activation of beta-catenin via preventing GSK3-mediated phosphorylation of beta-catenin. Phosphorylated, in vitro, by GRK5/6 within and outside the PPPSP motifs. Phosphorylation at Ser-1490 by CDK14 during G2/M phase leads to regulation of the Wnt signaling pathway during the cell cycle. Phosphorylation by GSK3B is induced by RPSO1 binding and inhibited by DKK1. Phosphorylated, in vitro, by casein kinase I on Thr-1479 (By similarity).</text>
</comment>
<comment type="PTM">
    <text evidence="1">Undergoes gamma-secretase-dependent regulated intramembrane proteolysis (RIP). The extracellular domain is first released by shedding, and then, through the action of gamma-secretase, the intracellular domain (ICD) is released into the cytoplasm where it is free to bind to GSK3B and to activate canonical Wnt signaling (By similarity).</text>
</comment>
<comment type="PTM">
    <text evidence="1">Palmitoylation on the two sites near the transmembrane domain leads to release of LRP6 from the endoplasmic reticulum.</text>
</comment>
<comment type="PTM">
    <text evidence="1">Mono-ubiquitinated which retains LRP6 in the endoplasmic reticulum. Ubiquitinated by ZNRF3, leading to its degradation by the proteasome (By similarity).</text>
</comment>
<comment type="PTM">
    <text evidence="1">N-glycosylation is required for cell surface location.</text>
</comment>
<comment type="disease">
    <text evidence="9 12">Defects in Lrp6 are the cause of Ringelschwanz (rs) phenotype. Rs phenotype is a spontaneous mutation that is characterized by a combination of multiple Wnt-deficient phenotypes including dysmorphologies of the axial skeleton, digits and the neural tube. The establishment of the anteroposterior somite compartments, the epithelialization of nascent somites, and the formation of segment borders are disturbed in (rs) mutants. There is delayed ossification at birth and a low bone mass phenotype in adults. Functional analyses reveal impaired targeting to the plasma surface due to reduced interaction with MESD leading to inhibited Wnt/beta-catenin signaling.</text>
</comment>
<comment type="similarity">
    <text evidence="15">Belongs to the LDLR family.</text>
</comment>
<reference key="1">
    <citation type="journal article" date="1998" name="Biochem. Biophys. Res. Commun.">
        <title>Isolation and characterization of LRP6, a novel member of the low density lipoprotein receptor gene family.</title>
        <authorList>
            <person name="Brown S.D."/>
            <person name="Twells R.C."/>
            <person name="Hey P.J."/>
            <person name="Cox R.D."/>
            <person name="Levy E.R."/>
            <person name="Soderman A.R."/>
            <person name="Metzker M.L."/>
            <person name="Caskey C.T."/>
            <person name="Todd J.A."/>
            <person name="Hess J.F."/>
        </authorList>
    </citation>
    <scope>NUCLEOTIDE SEQUENCE [MRNA]</scope>
    <source>
        <strain>BALB/cJ</strain>
        <tissue>Liver</tissue>
    </source>
</reference>
<reference key="2">
    <citation type="journal article" date="2004" name="Genome Res.">
        <title>The status, quality, and expansion of the NIH full-length cDNA project: the Mammalian Gene Collection (MGC).</title>
        <authorList>
            <consortium name="The MGC Project Team"/>
        </authorList>
    </citation>
    <scope>NUCLEOTIDE SEQUENCE [LARGE SCALE MRNA]</scope>
    <source>
        <strain>C57BL/6J</strain>
        <tissue>Brain</tissue>
    </source>
</reference>
<reference key="3">
    <citation type="journal article" date="2003" name="Cell">
        <title>Mesd encodes an LRP5/6 chaperone essential for specification of mouse embryonic polarity.</title>
        <authorList>
            <person name="Hsieh J.-C."/>
            <person name="Lee L."/>
            <person name="Zhang L."/>
            <person name="Wefer S."/>
            <person name="Brown K."/>
            <person name="DeRossi C."/>
            <person name="Wines M.E."/>
            <person name="Rosenquist T."/>
            <person name="Holdener B.C."/>
        </authorList>
    </citation>
    <scope>INTERACTION WITH MESD</scope>
    <scope>SUBUNIT</scope>
    <scope>SUBCELLULAR LOCATION</scope>
</reference>
<reference key="4">
    <citation type="journal article" date="2003" name="Neurosci. Res.">
        <title>Receptor-type protein tyrosine phosphatase zeta as a component of the signaling receptor complex for midkine-dependent survival of embryonic neurons.</title>
        <authorList>
            <person name="Sakaguchi N."/>
            <person name="Muramatsu H."/>
            <person name="Ichihara-Tanaka K."/>
            <person name="Maeda N."/>
            <person name="Noda M."/>
            <person name="Yamamoto T."/>
            <person name="Michikawa M."/>
            <person name="Ikematsu S."/>
            <person name="Sakuma S."/>
            <person name="Muramatsu T."/>
        </authorList>
    </citation>
    <scope>INTERACTION WITH MDK</scope>
</reference>
<reference key="5">
    <citation type="journal article" date="2004" name="Development">
        <title>The Wnt co-receptors Lrp5 and Lrp6 are essential for gastrulation in mice.</title>
        <authorList>
            <person name="Kelly O.G."/>
            <person name="Pinson K.I."/>
            <person name="Skarnes W.C."/>
        </authorList>
    </citation>
    <scope>FUNCTION</scope>
    <scope>TISSUE SPECIFICITY</scope>
</reference>
<reference key="6">
    <citation type="journal article" date="2006" name="J. Biol. Chem.">
        <title>Mouse cristin/R-spondin family proteins are novel ligands for the Frizzled 8 and LRP6 receptors and activate beta-catenin-dependent gene expression.</title>
        <authorList>
            <person name="Nam J.-S."/>
            <person name="Turcotte T.J."/>
            <person name="Smith P.F."/>
            <person name="Choi S."/>
            <person name="Yoon J.K."/>
        </authorList>
    </citation>
    <scope>INTERACTION WITH RSPO1 AND RSPO3</scope>
</reference>
<reference key="7">
    <citation type="journal article" date="2007" name="Biochem. Biophys. Res. Commun.">
        <title>GRB10 binds to LRP6, the Wnt co-receptor and inhibits canonical Wnt signaling pathway.</title>
        <authorList>
            <person name="Tezuka N."/>
            <person name="Brown A.M."/>
            <person name="Yanagawa S."/>
        </authorList>
    </citation>
    <scope>INTERACTION WITH GRB10</scope>
</reference>
<reference key="8">
    <citation type="journal article" date="2007" name="Mol. Cell. Biol.">
        <title>Analysis of endogenous LRP6 function reveals a novel feedback mechanism by which Wnt negatively regulates its receptor.</title>
        <authorList>
            <person name="Khan Z."/>
            <person name="Vijayakumar S."/>
            <person name="de la Torre T.V."/>
            <person name="Rotolo S."/>
            <person name="Bafico A."/>
        </authorList>
    </citation>
    <scope>PHOSPHORYLATION AT SER-1490</scope>
    <scope>INDUCTION</scope>
    <scope>SUBCELLULAR LOCATION</scope>
</reference>
<reference key="9">
    <citation type="journal article" date="2009" name="Biochem. Biophys. Res. Commun.">
        <title>Neucrin is a novel neural-specific secreted antagonist to canonical Wnt signaling.</title>
        <authorList>
            <person name="Miyake A."/>
            <person name="Takahashi Y."/>
            <person name="Miwa H."/>
            <person name="Shimada A."/>
            <person name="Konishi M."/>
            <person name="Itoh N."/>
        </authorList>
    </citation>
    <scope>INTERACTION WITH DRAXIN</scope>
</reference>
<reference key="10">
    <citation type="journal article" date="2010" name="Cell">
        <title>A tissue-specific atlas of mouse protein phosphorylation and expression.</title>
        <authorList>
            <person name="Huttlin E.L."/>
            <person name="Jedrychowski M.P."/>
            <person name="Elias J.E."/>
            <person name="Goswami T."/>
            <person name="Rad R."/>
            <person name="Beausoleil S.A."/>
            <person name="Villen J."/>
            <person name="Haas W."/>
            <person name="Sowa M.E."/>
            <person name="Gygi S.P."/>
        </authorList>
    </citation>
    <scope>IDENTIFICATION BY MASS SPECTROMETRY [LARGE SCALE ANALYSIS]</scope>
    <source>
        <tissue>Kidney</tissue>
    </source>
</reference>
<reference key="11">
    <citation type="journal article" date="2019" name="Science">
        <title>LMBR1L regulates lymphopoiesis through Wnt/beta-catenin signaling.</title>
        <authorList>
            <person name="Choi J.H."/>
            <person name="Zhong X."/>
            <person name="McAlpine W."/>
            <person name="Liao T.C."/>
            <person name="Zhang D."/>
            <person name="Fang B."/>
            <person name="Russell J."/>
            <person name="Ludwig S."/>
            <person name="Nair-Gill E."/>
            <person name="Zhang Z."/>
            <person name="Wang K.W."/>
            <person name="Misawa T."/>
            <person name="Zhan X."/>
            <person name="Choi M."/>
            <person name="Wang T."/>
            <person name="Li X."/>
            <person name="Tang M."/>
            <person name="Sun Q."/>
            <person name="Yu L."/>
            <person name="Murray A.R."/>
            <person name="Moresco E.M.Y."/>
            <person name="Beutler B."/>
        </authorList>
    </citation>
    <scope>INTERACTION WITH LMBR1L</scope>
</reference>
<reference key="12">
    <citation type="journal article" date="2004" name="Development">
        <title>Skeletal defects in ringelschwanz mutant mice reveal that Lrp6 is required for proper somitogenesis and osteogenesis.</title>
        <authorList>
            <person name="Kokubu C."/>
            <person name="Heinzmann U."/>
            <person name="Kokubu T."/>
            <person name="Sakai N."/>
            <person name="Kubota T."/>
            <person name="Kawai M."/>
            <person name="Wahl M.B."/>
            <person name="Galceran J."/>
            <person name="Grosschedl R."/>
            <person name="Ozono K."/>
            <person name="Imai K."/>
        </authorList>
    </citation>
    <scope>VARIANT RS TRP-886</scope>
</reference>
<reference key="13">
    <citation type="journal article" date="2008" name="J. Bone Miner. Res.">
        <title>Lrp6 hypomorphic mutation affects bone mass through bone resorption in mice and impairs interaction with Mesd.</title>
        <authorList>
            <person name="Kubota T."/>
            <person name="Michigami T."/>
            <person name="Sakaguchi N."/>
            <person name="Kokubu C."/>
            <person name="Suzuki A."/>
            <person name="Namba N."/>
            <person name="Sakai N."/>
            <person name="Nakajima S."/>
            <person name="Imai K."/>
            <person name="Ozono K."/>
        </authorList>
    </citation>
    <scope>CHARACTERIZATION OF VARIANT RS TRP-886</scope>
    <scope>SUBCELLULAR LOCATION</scope>
    <scope>INTERACTION WITH DKK1; WNT1 AND MESD</scope>
</reference>
<evidence type="ECO:0000250" key="1"/>
<evidence type="ECO:0000250" key="2">
    <source>
        <dbReference type="UniProtKB" id="O75581"/>
    </source>
</evidence>
<evidence type="ECO:0000255" key="3"/>
<evidence type="ECO:0000255" key="4">
    <source>
        <dbReference type="PROSITE-ProRule" id="PRU00124"/>
    </source>
</evidence>
<evidence type="ECO:0000256" key="5">
    <source>
        <dbReference type="SAM" id="MobiDB-lite"/>
    </source>
</evidence>
<evidence type="ECO:0000269" key="6">
    <source>
    </source>
</evidence>
<evidence type="ECO:0000269" key="7">
    <source>
    </source>
</evidence>
<evidence type="ECO:0000269" key="8">
    <source>
    </source>
</evidence>
<evidence type="ECO:0000269" key="9">
    <source>
    </source>
</evidence>
<evidence type="ECO:0000269" key="10">
    <source>
    </source>
</evidence>
<evidence type="ECO:0000269" key="11">
    <source>
    </source>
</evidence>
<evidence type="ECO:0000269" key="12">
    <source>
    </source>
</evidence>
<evidence type="ECO:0000269" key="13">
    <source>
    </source>
</evidence>
<evidence type="ECO:0000269" key="14">
    <source>
    </source>
</evidence>
<evidence type="ECO:0000305" key="15"/>
<keyword id="KW-1003">Cell membrane</keyword>
<keyword id="KW-0217">Developmental protein</keyword>
<keyword id="KW-0225">Disease variant</keyword>
<keyword id="KW-1015">Disulfide bond</keyword>
<keyword id="KW-0245">EGF-like domain</keyword>
<keyword id="KW-0254">Endocytosis</keyword>
<keyword id="KW-0256">Endoplasmic reticulum</keyword>
<keyword id="KW-0325">Glycoprotein</keyword>
<keyword id="KW-1017">Isopeptide bond</keyword>
<keyword id="KW-0449">Lipoprotein</keyword>
<keyword id="KW-0472">Membrane</keyword>
<keyword id="KW-0564">Palmitate</keyword>
<keyword id="KW-0597">Phosphoprotein</keyword>
<keyword id="KW-0675">Receptor</keyword>
<keyword id="KW-1185">Reference proteome</keyword>
<keyword id="KW-0677">Repeat</keyword>
<keyword id="KW-0732">Signal</keyword>
<keyword id="KW-0812">Transmembrane</keyword>
<keyword id="KW-1133">Transmembrane helix</keyword>
<keyword id="KW-0832">Ubl conjugation</keyword>
<keyword id="KW-0879">Wnt signaling pathway</keyword>
<feature type="signal peptide" evidence="3">
    <location>
        <begin position="1"/>
        <end position="19"/>
    </location>
</feature>
<feature type="chain" id="PRO_0000017331" description="Low-density lipoprotein receptor-related protein 6">
    <location>
        <begin position="20"/>
        <end position="1613"/>
    </location>
</feature>
<feature type="topological domain" description="Extracellular" evidence="3">
    <location>
        <begin position="20"/>
        <end position="1370"/>
    </location>
</feature>
<feature type="transmembrane region" description="Helical" evidence="3">
    <location>
        <begin position="1371"/>
        <end position="1393"/>
    </location>
</feature>
<feature type="topological domain" description="Cytoplasmic" evidence="3">
    <location>
        <begin position="1394"/>
        <end position="1613"/>
    </location>
</feature>
<feature type="repeat" description="LDL-receptor class B 1">
    <location>
        <begin position="63"/>
        <end position="106"/>
    </location>
</feature>
<feature type="repeat" description="LDL-receptor class B 2">
    <location>
        <begin position="107"/>
        <end position="149"/>
    </location>
</feature>
<feature type="repeat" description="LDL-receptor class B 3">
    <location>
        <begin position="150"/>
        <end position="193"/>
    </location>
</feature>
<feature type="repeat" description="LDL-receptor class B 4">
    <location>
        <begin position="194"/>
        <end position="235"/>
    </location>
</feature>
<feature type="repeat" description="LDL-receptor class B 5">
    <location>
        <begin position="236"/>
        <end position="277"/>
    </location>
</feature>
<feature type="domain" description="EGF-like 1">
    <location>
        <begin position="282"/>
        <end position="324"/>
    </location>
</feature>
<feature type="repeat" description="LDL-receptor class B 6">
    <location>
        <begin position="372"/>
        <end position="414"/>
    </location>
</feature>
<feature type="repeat" description="LDL-receptor class B 7">
    <location>
        <begin position="415"/>
        <end position="457"/>
    </location>
</feature>
<feature type="repeat" description="LDL-receptor class B 8">
    <location>
        <begin position="458"/>
        <end position="501"/>
    </location>
</feature>
<feature type="repeat" description="LDL-receptor class B 9">
    <location>
        <begin position="502"/>
        <end position="542"/>
    </location>
</feature>
<feature type="repeat" description="LDL-receptor class B 10">
    <location>
        <begin position="543"/>
        <end position="587"/>
    </location>
</feature>
<feature type="domain" description="EGF-like 2">
    <location>
        <begin position="588"/>
        <end position="628"/>
    </location>
</feature>
<feature type="repeat" description="LDL-receptor class B 11">
    <location>
        <begin position="674"/>
        <end position="716"/>
    </location>
</feature>
<feature type="repeat" description="LDL-receptor class B 12">
    <location>
        <begin position="717"/>
        <end position="759"/>
    </location>
</feature>
<feature type="repeat" description="LDL-receptor class B 13">
    <location>
        <begin position="760"/>
        <end position="802"/>
    </location>
</feature>
<feature type="repeat" description="LDL-receptor class B 14">
    <location>
        <begin position="803"/>
        <end position="842"/>
    </location>
</feature>
<feature type="repeat" description="LDL-receptor class B 15">
    <location>
        <begin position="843"/>
        <end position="885"/>
    </location>
</feature>
<feature type="domain" description="EGF-like 3">
    <location>
        <begin position="889"/>
        <end position="930"/>
    </location>
</feature>
<feature type="repeat" description="LDL-receptor class B 16">
    <location>
        <begin position="977"/>
        <end position="1025"/>
    </location>
</feature>
<feature type="repeat" description="LDL-receptor class B 17">
    <location>
        <begin position="1026"/>
        <end position="1068"/>
    </location>
</feature>
<feature type="repeat" description="LDL-receptor class B 18">
    <location>
        <begin position="1069"/>
        <end position="1113"/>
    </location>
</feature>
<feature type="repeat" description="LDL-receptor class B 19">
    <location>
        <begin position="1114"/>
        <end position="1156"/>
    </location>
</feature>
<feature type="repeat" description="LDL-receptor class B 20">
    <location>
        <begin position="1157"/>
        <end position="1198"/>
    </location>
</feature>
<feature type="domain" description="EGF-like 4">
    <location>
        <begin position="1203"/>
        <end position="1244"/>
    </location>
</feature>
<feature type="domain" description="LDL-receptor class A 1" evidence="4">
    <location>
        <begin position="1248"/>
        <end position="1286"/>
    </location>
</feature>
<feature type="domain" description="LDL-receptor class A 2" evidence="4">
    <location>
        <begin position="1287"/>
        <end position="1323"/>
    </location>
</feature>
<feature type="domain" description="LDL-receptor class A 3" evidence="4">
    <location>
        <begin position="1325"/>
        <end position="1361"/>
    </location>
</feature>
<feature type="region of interest" description="Beta-propeller 1">
    <location>
        <begin position="20"/>
        <end position="275"/>
    </location>
</feature>
<feature type="region of interest" description="Beta-propeller 2">
    <location>
        <begin position="328"/>
        <end position="589"/>
    </location>
</feature>
<feature type="region of interest" description="Beta-propeller 3">
    <location>
        <begin position="631"/>
        <end position="890"/>
    </location>
</feature>
<feature type="region of interest" description="Beta-propeller 4">
    <location>
        <begin position="933"/>
        <end position="1202"/>
    </location>
</feature>
<feature type="region of interest" description="Disordered" evidence="5">
    <location>
        <begin position="1556"/>
        <end position="1613"/>
    </location>
</feature>
<feature type="short sequence motif" description="PPPSP motif A">
    <location>
        <begin position="1487"/>
        <end position="1493"/>
    </location>
</feature>
<feature type="short sequence motif" description="PPPSP motif B">
    <location>
        <begin position="1527"/>
        <end position="1534"/>
    </location>
</feature>
<feature type="short sequence motif" description="PPPSP motif C">
    <location>
        <begin position="1568"/>
        <end position="1575"/>
    </location>
</feature>
<feature type="short sequence motif" description="PPPSP motif D">
    <location>
        <begin position="1588"/>
        <end position="1593"/>
    </location>
</feature>
<feature type="short sequence motif" description="PPPSP motif E">
    <location>
        <begin position="1603"/>
        <end position="1610"/>
    </location>
</feature>
<feature type="compositionally biased region" description="Pro residues" evidence="5">
    <location>
        <begin position="1602"/>
        <end position="1613"/>
    </location>
</feature>
<feature type="modified residue" description="Phosphoserine; by CK1" evidence="2">
    <location>
        <position position="1420"/>
    </location>
</feature>
<feature type="modified residue" description="Phosphoserine; by CK1" evidence="2">
    <location>
        <position position="1430"/>
    </location>
</feature>
<feature type="modified residue" description="Phosphothreonine" evidence="2">
    <location>
        <position position="1479"/>
    </location>
</feature>
<feature type="modified residue" description="Phosphoserine; by CDK14, GRK5 and GRK6" evidence="2">
    <location>
        <position position="1490"/>
    </location>
</feature>
<feature type="modified residue" description="Phosphothreonine; by CK1" evidence="2">
    <location>
        <position position="1493"/>
    </location>
</feature>
<feature type="lipid moiety-binding region" description="S-palmitoyl cysteine" evidence="1">
    <location>
        <position position="1394"/>
    </location>
</feature>
<feature type="lipid moiety-binding region" description="S-palmitoyl cysteine" evidence="1">
    <location>
        <position position="1399"/>
    </location>
</feature>
<feature type="glycosylation site" description="N-linked (GlcNAc...) asparagine" evidence="3">
    <location>
        <position position="42"/>
    </location>
</feature>
<feature type="glycosylation site" description="N-linked (GlcNAc...) asparagine" evidence="3">
    <location>
        <position position="81"/>
    </location>
</feature>
<feature type="glycosylation site" description="N-linked (GlcNAc...) asparagine" evidence="3">
    <location>
        <position position="281"/>
    </location>
</feature>
<feature type="glycosylation site" description="N-linked (GlcNAc...) asparagine" evidence="3">
    <location>
        <position position="433"/>
    </location>
</feature>
<feature type="glycosylation site" description="N-linked (GlcNAc...) asparagine" evidence="3">
    <location>
        <position position="486"/>
    </location>
</feature>
<feature type="glycosylation site" description="N-linked (GlcNAc...) asparagine" evidence="3">
    <location>
        <position position="692"/>
    </location>
</feature>
<feature type="glycosylation site" description="N-linked (GlcNAc...) asparagine" evidence="3">
    <location>
        <position position="859"/>
    </location>
</feature>
<feature type="glycosylation site" description="N-linked (GlcNAc...) asparagine" evidence="3">
    <location>
        <position position="865"/>
    </location>
</feature>
<feature type="glycosylation site" description="N-linked (GlcNAc...) asparagine" evidence="3">
    <location>
        <position position="926"/>
    </location>
</feature>
<feature type="disulfide bond" evidence="4">
    <location>
        <begin position="286"/>
        <end position="297"/>
    </location>
</feature>
<feature type="disulfide bond" evidence="4">
    <location>
        <begin position="293"/>
        <end position="308"/>
    </location>
</feature>
<feature type="disulfide bond" evidence="4">
    <location>
        <begin position="310"/>
        <end position="323"/>
    </location>
</feature>
<feature type="disulfide bond" evidence="4">
    <location>
        <begin position="592"/>
        <end position="603"/>
    </location>
</feature>
<feature type="disulfide bond" evidence="4">
    <location>
        <begin position="599"/>
        <end position="612"/>
    </location>
</feature>
<feature type="disulfide bond" evidence="4">
    <location>
        <begin position="614"/>
        <end position="627"/>
    </location>
</feature>
<feature type="disulfide bond" evidence="4">
    <location>
        <begin position="893"/>
        <end position="904"/>
    </location>
</feature>
<feature type="disulfide bond" evidence="4">
    <location>
        <begin position="900"/>
        <end position="914"/>
    </location>
</feature>
<feature type="disulfide bond" evidence="4">
    <location>
        <begin position="916"/>
        <end position="929"/>
    </location>
</feature>
<feature type="disulfide bond" evidence="4">
    <location>
        <begin position="1207"/>
        <end position="1218"/>
    </location>
</feature>
<feature type="disulfide bond" evidence="4">
    <location>
        <begin position="1214"/>
        <end position="1228"/>
    </location>
</feature>
<feature type="disulfide bond" evidence="4">
    <location>
        <begin position="1230"/>
        <end position="1243"/>
    </location>
</feature>
<feature type="disulfide bond" evidence="4">
    <location>
        <begin position="1249"/>
        <end position="1263"/>
    </location>
</feature>
<feature type="disulfide bond" evidence="4">
    <location>
        <begin position="1256"/>
        <end position="1276"/>
    </location>
</feature>
<feature type="disulfide bond" evidence="4">
    <location>
        <begin position="1270"/>
        <end position="1285"/>
    </location>
</feature>
<feature type="disulfide bond" evidence="4">
    <location>
        <begin position="1288"/>
        <end position="1300"/>
    </location>
</feature>
<feature type="disulfide bond" evidence="4">
    <location>
        <begin position="1295"/>
        <end position="1313"/>
    </location>
</feature>
<feature type="disulfide bond" evidence="4">
    <location>
        <begin position="1307"/>
        <end position="1322"/>
    </location>
</feature>
<feature type="disulfide bond" evidence="4">
    <location>
        <begin position="1326"/>
        <end position="1338"/>
    </location>
</feature>
<feature type="disulfide bond" evidence="4">
    <location>
        <begin position="1333"/>
        <end position="1351"/>
    </location>
</feature>
<feature type="disulfide bond" evidence="4">
    <location>
        <begin position="1345"/>
        <end position="1360"/>
    </location>
</feature>
<feature type="cross-link" description="Glycyl lysine isopeptide (Lys-Gly) (interchain with G-Cter in ubiquitin)" evidence="2">
    <location>
        <position position="1403"/>
    </location>
</feature>
<feature type="sequence variant" description="In rs." evidence="9 12">
    <original>R</original>
    <variation>W</variation>
    <location>
        <position position="886"/>
    </location>
</feature>
<feature type="sequence conflict" description="In Ref. 2; AAH60704." evidence="15" ref="2">
    <original>S</original>
    <variation>T</variation>
    <location>
        <position position="83"/>
    </location>
</feature>
<feature type="sequence conflict" description="In Ref. 2; AAH60704." evidence="15" ref="2">
    <original>M</original>
    <variation>L</variation>
    <location>
        <position position="317"/>
    </location>
</feature>
<feature type="sequence conflict" description="In Ref. 2; AAH60704." evidence="15" ref="2">
    <original>V</original>
    <variation>I</variation>
    <location>
        <position position="586"/>
    </location>
</feature>
<feature type="sequence conflict" description="In Ref. 2; AAH60704." evidence="15" ref="2">
    <original>G</original>
    <variation>S</variation>
    <location>
        <position position="622"/>
    </location>
</feature>
<feature type="sequence conflict" description="In Ref. 2; AAH60704." evidence="15" ref="2">
    <original>S</original>
    <variation>T</variation>
    <location>
        <position position="933"/>
    </location>
</feature>
<accession>O88572</accession>
<organism>
    <name type="scientific">Mus musculus</name>
    <name type="common">Mouse</name>
    <dbReference type="NCBI Taxonomy" id="10090"/>
    <lineage>
        <taxon>Eukaryota</taxon>
        <taxon>Metazoa</taxon>
        <taxon>Chordata</taxon>
        <taxon>Craniata</taxon>
        <taxon>Vertebrata</taxon>
        <taxon>Euteleostomi</taxon>
        <taxon>Mammalia</taxon>
        <taxon>Eutheria</taxon>
        <taxon>Euarchontoglires</taxon>
        <taxon>Glires</taxon>
        <taxon>Rodentia</taxon>
        <taxon>Myomorpha</taxon>
        <taxon>Muroidea</taxon>
        <taxon>Muridae</taxon>
        <taxon>Murinae</taxon>
        <taxon>Mus</taxon>
        <taxon>Mus</taxon>
    </lineage>
</organism>
<proteinExistence type="evidence at protein level"/>
<protein>
    <recommendedName>
        <fullName>Low-density lipoprotein receptor-related protein 6</fullName>
        <shortName>LRP-6</shortName>
    </recommendedName>
</protein>
<gene>
    <name type="primary">Lrp6</name>
</gene>
<dbReference type="EMBL" id="AF074265">
    <property type="protein sequence ID" value="AAC33007.1"/>
    <property type="molecule type" value="mRNA"/>
</dbReference>
<dbReference type="EMBL" id="BC060704">
    <property type="protein sequence ID" value="AAH60704.1"/>
    <property type="molecule type" value="mRNA"/>
</dbReference>
<dbReference type="CCDS" id="CCDS39678.1"/>
<dbReference type="PIR" id="JE0273">
    <property type="entry name" value="JE0273"/>
</dbReference>
<dbReference type="RefSeq" id="NP_032540.2">
    <property type="nucleotide sequence ID" value="NM_008514.4"/>
</dbReference>
<dbReference type="SMR" id="O88572"/>
<dbReference type="BioGRID" id="201203">
    <property type="interactions" value="13"/>
</dbReference>
<dbReference type="CORUM" id="O88572"/>
<dbReference type="DIP" id="DIP-46460N"/>
<dbReference type="FunCoup" id="O88572">
    <property type="interactions" value="1511"/>
</dbReference>
<dbReference type="IntAct" id="O88572">
    <property type="interactions" value="7"/>
</dbReference>
<dbReference type="MINT" id="O88572"/>
<dbReference type="STRING" id="10090.ENSMUSP00000032322"/>
<dbReference type="ChEMBL" id="CHEMBL4296099"/>
<dbReference type="GlyCosmos" id="O88572">
    <property type="glycosylation" value="9 sites, No reported glycans"/>
</dbReference>
<dbReference type="GlyGen" id="O88572">
    <property type="glycosylation" value="10 sites"/>
</dbReference>
<dbReference type="iPTMnet" id="O88572"/>
<dbReference type="PhosphoSitePlus" id="O88572"/>
<dbReference type="PaxDb" id="10090-ENSMUSP00000032322"/>
<dbReference type="PeptideAtlas" id="O88572"/>
<dbReference type="ProteomicsDB" id="252525"/>
<dbReference type="Pumba" id="O88572"/>
<dbReference type="DNASU" id="16974"/>
<dbReference type="GeneID" id="16974"/>
<dbReference type="KEGG" id="mmu:16974"/>
<dbReference type="UCSC" id="uc009ekl.2">
    <property type="organism name" value="mouse"/>
</dbReference>
<dbReference type="AGR" id="MGI:1298218"/>
<dbReference type="CTD" id="4040"/>
<dbReference type="MGI" id="MGI:1298218">
    <property type="gene designation" value="Lrp6"/>
</dbReference>
<dbReference type="eggNOG" id="KOG1215">
    <property type="taxonomic scope" value="Eukaryota"/>
</dbReference>
<dbReference type="InParanoid" id="O88572"/>
<dbReference type="OrthoDB" id="72419at2759"/>
<dbReference type="PhylomeDB" id="O88572"/>
<dbReference type="TreeFam" id="TF315253"/>
<dbReference type="Reactome" id="R-MMU-3772470">
    <property type="pathway name" value="Negative regulation of TCF-dependent signaling by WNT ligand antagonists"/>
</dbReference>
<dbReference type="Reactome" id="R-MMU-4641262">
    <property type="pathway name" value="Disassembly of the destruction complex and recruitment of AXIN to the membrane"/>
</dbReference>
<dbReference type="Reactome" id="R-MMU-4641263">
    <property type="pathway name" value="Regulation of FZD by ubiquitination"/>
</dbReference>
<dbReference type="BioGRID-ORCS" id="16974">
    <property type="hits" value="2 hits in 80 CRISPR screens"/>
</dbReference>
<dbReference type="ChiTaRS" id="Lrp6">
    <property type="organism name" value="mouse"/>
</dbReference>
<dbReference type="PRO" id="PR:O88572"/>
<dbReference type="Proteomes" id="UP000000589">
    <property type="component" value="Unplaced"/>
</dbReference>
<dbReference type="RNAct" id="O88572">
    <property type="molecule type" value="protein"/>
</dbReference>
<dbReference type="GO" id="GO:0005769">
    <property type="term" value="C:early endosome"/>
    <property type="evidence" value="ECO:0000314"/>
    <property type="project" value="MGI"/>
</dbReference>
<dbReference type="GO" id="GO:0005783">
    <property type="term" value="C:endoplasmic reticulum"/>
    <property type="evidence" value="ECO:0007669"/>
    <property type="project" value="UniProtKB-SubCell"/>
</dbReference>
<dbReference type="GO" id="GO:0016020">
    <property type="term" value="C:membrane"/>
    <property type="evidence" value="ECO:0000314"/>
    <property type="project" value="MGI"/>
</dbReference>
<dbReference type="GO" id="GO:0045121">
    <property type="term" value="C:membrane raft"/>
    <property type="evidence" value="ECO:0007669"/>
    <property type="project" value="UniProtKB-SubCell"/>
</dbReference>
<dbReference type="GO" id="GO:0005886">
    <property type="term" value="C:plasma membrane"/>
    <property type="evidence" value="ECO:0000314"/>
    <property type="project" value="MGI"/>
</dbReference>
<dbReference type="GO" id="GO:0034185">
    <property type="term" value="F:apolipoprotein binding"/>
    <property type="evidence" value="ECO:0000353"/>
    <property type="project" value="MGI"/>
</dbReference>
<dbReference type="GO" id="GO:0005041">
    <property type="term" value="F:low-density lipoprotein particle receptor activity"/>
    <property type="evidence" value="ECO:0000266"/>
    <property type="project" value="MGI"/>
</dbReference>
<dbReference type="GO" id="GO:0019534">
    <property type="term" value="F:toxin transmembrane transporter activity"/>
    <property type="evidence" value="ECO:0000315"/>
    <property type="project" value="BHF-UCL"/>
</dbReference>
<dbReference type="GO" id="GO:0042813">
    <property type="term" value="F:Wnt receptor activity"/>
    <property type="evidence" value="ECO:0007669"/>
    <property type="project" value="InterPro"/>
</dbReference>
<dbReference type="GO" id="GO:0017147">
    <property type="term" value="F:Wnt-protein binding"/>
    <property type="evidence" value="ECO:0000353"/>
    <property type="project" value="MGI"/>
</dbReference>
<dbReference type="GO" id="GO:0009952">
    <property type="term" value="P:anterior/posterior pattern specification"/>
    <property type="evidence" value="ECO:0000315"/>
    <property type="project" value="MGI"/>
</dbReference>
<dbReference type="GO" id="GO:0003401">
    <property type="term" value="P:axis elongation"/>
    <property type="evidence" value="ECO:0000315"/>
    <property type="project" value="MGI"/>
</dbReference>
<dbReference type="GO" id="GO:0090245">
    <property type="term" value="P:axis elongation involved in somitogenesis"/>
    <property type="evidence" value="ECO:0000316"/>
    <property type="project" value="MGI"/>
</dbReference>
<dbReference type="GO" id="GO:0046849">
    <property type="term" value="P:bone remodeling"/>
    <property type="evidence" value="ECO:0000316"/>
    <property type="project" value="MGI"/>
</dbReference>
<dbReference type="GO" id="GO:0060444">
    <property type="term" value="P:branching involved in mammary gland duct morphogenesis"/>
    <property type="evidence" value="ECO:0000315"/>
    <property type="project" value="MGI"/>
</dbReference>
<dbReference type="GO" id="GO:0060070">
    <property type="term" value="P:canonical Wnt signaling pathway"/>
    <property type="evidence" value="ECO:0000315"/>
    <property type="project" value="MGI"/>
</dbReference>
<dbReference type="GO" id="GO:0055008">
    <property type="term" value="P:cardiac muscle tissue morphogenesis"/>
    <property type="evidence" value="ECO:0000316"/>
    <property type="project" value="MGI"/>
</dbReference>
<dbReference type="GO" id="GO:0042074">
    <property type="term" value="P:cell migration involved in gastrulation"/>
    <property type="evidence" value="ECO:0000316"/>
    <property type="project" value="MGI"/>
</dbReference>
<dbReference type="GO" id="GO:0021587">
    <property type="term" value="P:cerebellum morphogenesis"/>
    <property type="evidence" value="ECO:0000315"/>
    <property type="project" value="MGI"/>
</dbReference>
<dbReference type="GO" id="GO:0021795">
    <property type="term" value="P:cerebral cortex cell migration"/>
    <property type="evidence" value="ECO:0000315"/>
    <property type="project" value="MGI"/>
</dbReference>
<dbReference type="GO" id="GO:0021987">
    <property type="term" value="P:cerebral cortex development"/>
    <property type="evidence" value="ECO:0000315"/>
    <property type="project" value="MGI"/>
</dbReference>
<dbReference type="GO" id="GO:0060026">
    <property type="term" value="P:convergent extension"/>
    <property type="evidence" value="ECO:0000316"/>
    <property type="project" value="MGI"/>
</dbReference>
<dbReference type="GO" id="GO:0071542">
    <property type="term" value="P:dopaminergic neuron differentiation"/>
    <property type="evidence" value="ECO:0000315"/>
    <property type="project" value="MGI"/>
</dbReference>
<dbReference type="GO" id="GO:0009950">
    <property type="term" value="P:dorsal/ventral axis specification"/>
    <property type="evidence" value="ECO:0000315"/>
    <property type="project" value="MGI"/>
</dbReference>
<dbReference type="GO" id="GO:0048596">
    <property type="term" value="P:embryonic camera-type eye morphogenesis"/>
    <property type="evidence" value="ECO:0000315"/>
    <property type="project" value="MGI"/>
</dbReference>
<dbReference type="GO" id="GO:0042733">
    <property type="term" value="P:embryonic digit morphogenesis"/>
    <property type="evidence" value="ECO:0000315"/>
    <property type="project" value="MGI"/>
</dbReference>
<dbReference type="GO" id="GO:0035115">
    <property type="term" value="P:embryonic forelimb morphogenesis"/>
    <property type="evidence" value="ECO:0000315"/>
    <property type="project" value="MGI"/>
</dbReference>
<dbReference type="GO" id="GO:0035116">
    <property type="term" value="P:embryonic hindlimb morphogenesis"/>
    <property type="evidence" value="ECO:0000315"/>
    <property type="project" value="MGI"/>
</dbReference>
<dbReference type="GO" id="GO:0030326">
    <property type="term" value="P:embryonic limb morphogenesis"/>
    <property type="evidence" value="ECO:0000316"/>
    <property type="project" value="MGI"/>
</dbReference>
<dbReference type="GO" id="GO:0009880">
    <property type="term" value="P:embryonic pattern specification"/>
    <property type="evidence" value="ECO:0000315"/>
    <property type="project" value="MGI"/>
</dbReference>
<dbReference type="GO" id="GO:0060059">
    <property type="term" value="P:embryonic retina morphogenesis in camera-type eye"/>
    <property type="evidence" value="ECO:0000315"/>
    <property type="project" value="MGI"/>
</dbReference>
<dbReference type="GO" id="GO:0060856">
    <property type="term" value="P:establishment of blood-brain barrier"/>
    <property type="evidence" value="ECO:0000315"/>
    <property type="project" value="MGI"/>
</dbReference>
<dbReference type="GO" id="GO:1990963">
    <property type="term" value="P:establishment of blood-retinal barrier"/>
    <property type="evidence" value="ECO:0000315"/>
    <property type="project" value="MGI"/>
</dbReference>
<dbReference type="GO" id="GO:0035261">
    <property type="term" value="P:external genitalia morphogenesis"/>
    <property type="evidence" value="ECO:0000315"/>
    <property type="project" value="MGI"/>
</dbReference>
<dbReference type="GO" id="GO:0060325">
    <property type="term" value="P:face morphogenesis"/>
    <property type="evidence" value="ECO:0000315"/>
    <property type="project" value="MGI"/>
</dbReference>
<dbReference type="GO" id="GO:0045444">
    <property type="term" value="P:fat cell differentiation"/>
    <property type="evidence" value="ECO:0000315"/>
    <property type="project" value="MGI"/>
</dbReference>
<dbReference type="GO" id="GO:0030900">
    <property type="term" value="P:forebrain development"/>
    <property type="evidence" value="ECO:0000315"/>
    <property type="project" value="MGI"/>
</dbReference>
<dbReference type="GO" id="GO:0021872">
    <property type="term" value="P:forebrain generation of neurons"/>
    <property type="evidence" value="ECO:0000315"/>
    <property type="project" value="MGI"/>
</dbReference>
<dbReference type="GO" id="GO:0021861">
    <property type="term" value="P:forebrain radial glial cell differentiation"/>
    <property type="evidence" value="ECO:0000316"/>
    <property type="project" value="MGI"/>
</dbReference>
<dbReference type="GO" id="GO:0021943">
    <property type="term" value="P:formation of radial glial scaffolds"/>
    <property type="evidence" value="ECO:0000316"/>
    <property type="project" value="MGI"/>
</dbReference>
<dbReference type="GO" id="GO:0001702">
    <property type="term" value="P:gastrulation with mouth forming second"/>
    <property type="evidence" value="ECO:0000316"/>
    <property type="project" value="MGI"/>
</dbReference>
<dbReference type="GO" id="GO:0048699">
    <property type="term" value="P:generation of neurons"/>
    <property type="evidence" value="ECO:0000315"/>
    <property type="project" value="MGI"/>
</dbReference>
<dbReference type="GO" id="GO:0001947">
    <property type="term" value="P:heart looping"/>
    <property type="evidence" value="ECO:0000316"/>
    <property type="project" value="MGI"/>
</dbReference>
<dbReference type="GO" id="GO:0035108">
    <property type="term" value="P:limb morphogenesis"/>
    <property type="evidence" value="ECO:0000315"/>
    <property type="project" value="MGI"/>
</dbReference>
<dbReference type="GO" id="GO:0060603">
    <property type="term" value="P:mammary gland duct morphogenesis"/>
    <property type="evidence" value="ECO:0000316"/>
    <property type="project" value="MGI"/>
</dbReference>
<dbReference type="GO" id="GO:0060596">
    <property type="term" value="P:mammary placode formation"/>
    <property type="evidence" value="ECO:0000315"/>
    <property type="project" value="MGI"/>
</dbReference>
<dbReference type="GO" id="GO:0010463">
    <property type="term" value="P:mesenchymal cell proliferation"/>
    <property type="evidence" value="ECO:0000315"/>
    <property type="project" value="MGI"/>
</dbReference>
<dbReference type="GO" id="GO:0008078">
    <property type="term" value="P:mesodermal cell migration"/>
    <property type="evidence" value="ECO:0000316"/>
    <property type="project" value="MGI"/>
</dbReference>
<dbReference type="GO" id="GO:0030901">
    <property type="term" value="P:midbrain development"/>
    <property type="evidence" value="ECO:0000315"/>
    <property type="project" value="MGI"/>
</dbReference>
<dbReference type="GO" id="GO:0030917">
    <property type="term" value="P:midbrain-hindbrain boundary development"/>
    <property type="evidence" value="ECO:0000315"/>
    <property type="project" value="MGI"/>
</dbReference>
<dbReference type="GO" id="GO:0050680">
    <property type="term" value="P:negative regulation of epithelial cell proliferation"/>
    <property type="evidence" value="ECO:0000315"/>
    <property type="project" value="MGI"/>
</dbReference>
<dbReference type="GO" id="GO:0045599">
    <property type="term" value="P:negative regulation of fat cell differentiation"/>
    <property type="evidence" value="ECO:0000315"/>
    <property type="project" value="MGI"/>
</dbReference>
<dbReference type="GO" id="GO:2000051">
    <property type="term" value="P:negative regulation of non-canonical Wnt signaling pathway"/>
    <property type="evidence" value="ECO:0000316"/>
    <property type="project" value="MGI"/>
</dbReference>
<dbReference type="GO" id="GO:0001843">
    <property type="term" value="P:neural tube closure"/>
    <property type="evidence" value="ECO:0000315"/>
    <property type="project" value="MGI"/>
</dbReference>
<dbReference type="GO" id="GO:0021915">
    <property type="term" value="P:neural tube development"/>
    <property type="evidence" value="ECO:0000316"/>
    <property type="project" value="MGI"/>
</dbReference>
<dbReference type="GO" id="GO:0110135">
    <property type="term" value="P:Norrin signaling pathway"/>
    <property type="evidence" value="ECO:0000314"/>
    <property type="project" value="BHF-UCL"/>
</dbReference>
<dbReference type="GO" id="GO:0042475">
    <property type="term" value="P:odontogenesis of dentin-containing tooth"/>
    <property type="evidence" value="ECO:0000315"/>
    <property type="project" value="MGI"/>
</dbReference>
<dbReference type="GO" id="GO:0003151">
    <property type="term" value="P:outflow tract morphogenesis"/>
    <property type="evidence" value="ECO:0000316"/>
    <property type="project" value="MGI"/>
</dbReference>
<dbReference type="GO" id="GO:0003344">
    <property type="term" value="P:pericardium morphogenesis"/>
    <property type="evidence" value="ECO:0000316"/>
    <property type="project" value="MGI"/>
</dbReference>
<dbReference type="GO" id="GO:0043065">
    <property type="term" value="P:positive regulation of apoptotic process"/>
    <property type="evidence" value="ECO:0000315"/>
    <property type="project" value="MGI"/>
</dbReference>
<dbReference type="GO" id="GO:0045780">
    <property type="term" value="P:positive regulation of bone resorption"/>
    <property type="evidence" value="ECO:0000315"/>
    <property type="project" value="MGI"/>
</dbReference>
<dbReference type="GO" id="GO:0002053">
    <property type="term" value="P:positive regulation of mesenchymal cell proliferation"/>
    <property type="evidence" value="ECO:0000315"/>
    <property type="project" value="MGI"/>
</dbReference>
<dbReference type="GO" id="GO:0010976">
    <property type="term" value="P:positive regulation of neuron projection development"/>
    <property type="evidence" value="ECO:0000316"/>
    <property type="project" value="ARUK-UCL"/>
</dbReference>
<dbReference type="GO" id="GO:0045778">
    <property type="term" value="P:positive regulation of ossification"/>
    <property type="evidence" value="ECO:0000315"/>
    <property type="project" value="MGI"/>
</dbReference>
<dbReference type="GO" id="GO:2000648">
    <property type="term" value="P:positive regulation of stem cell proliferation"/>
    <property type="evidence" value="ECO:0000315"/>
    <property type="project" value="MGI"/>
</dbReference>
<dbReference type="GO" id="GO:0045944">
    <property type="term" value="P:positive regulation of transcription by RNA polymerase II"/>
    <property type="evidence" value="ECO:0000314"/>
    <property type="project" value="BHF-UCL"/>
</dbReference>
<dbReference type="GO" id="GO:0036342">
    <property type="term" value="P:post-anal tail morphogenesis"/>
    <property type="evidence" value="ECO:0000315"/>
    <property type="project" value="MGI"/>
</dbReference>
<dbReference type="GO" id="GO:0090009">
    <property type="term" value="P:primitive streak formation"/>
    <property type="evidence" value="ECO:0000316"/>
    <property type="project" value="MGI"/>
</dbReference>
<dbReference type="GO" id="GO:0090118">
    <property type="term" value="P:receptor-mediated endocytosis involved in cholesterol transport"/>
    <property type="evidence" value="ECO:0000315"/>
    <property type="project" value="MGI"/>
</dbReference>
<dbReference type="GO" id="GO:0060284">
    <property type="term" value="P:regulation of cell development"/>
    <property type="evidence" value="ECO:0000315"/>
    <property type="project" value="MGI"/>
</dbReference>
<dbReference type="GO" id="GO:0050678">
    <property type="term" value="P:regulation of epithelial cell proliferation"/>
    <property type="evidence" value="ECO:0000315"/>
    <property type="project" value="MGI"/>
</dbReference>
<dbReference type="GO" id="GO:0051593">
    <property type="term" value="P:response to folic acid"/>
    <property type="evidence" value="ECO:0000315"/>
    <property type="project" value="MGI"/>
</dbReference>
<dbReference type="GO" id="GO:0060042">
    <property type="term" value="P:retina morphogenesis in camera-type eye"/>
    <property type="evidence" value="ECO:0000315"/>
    <property type="project" value="MGI"/>
</dbReference>
<dbReference type="GO" id="GO:0060021">
    <property type="term" value="P:roof of mouth development"/>
    <property type="evidence" value="ECO:0000315"/>
    <property type="project" value="MGI"/>
</dbReference>
<dbReference type="GO" id="GO:0048705">
    <property type="term" value="P:skeletal system morphogenesis"/>
    <property type="evidence" value="ECO:0000315"/>
    <property type="project" value="MGI"/>
</dbReference>
<dbReference type="GO" id="GO:0001756">
    <property type="term" value="P:somitogenesis"/>
    <property type="evidence" value="ECO:0000316"/>
    <property type="project" value="MGI"/>
</dbReference>
<dbReference type="GO" id="GO:0072089">
    <property type="term" value="P:stem cell proliferation"/>
    <property type="evidence" value="ECO:0000315"/>
    <property type="project" value="MGI"/>
</dbReference>
<dbReference type="GO" id="GO:0021794">
    <property type="term" value="P:thalamus development"/>
    <property type="evidence" value="ECO:0000315"/>
    <property type="project" value="MGI"/>
</dbReference>
<dbReference type="GO" id="GO:0060535">
    <property type="term" value="P:trachea cartilage morphogenesis"/>
    <property type="evidence" value="ECO:0000316"/>
    <property type="project" value="MGI"/>
</dbReference>
<dbReference type="GO" id="GO:0060412">
    <property type="term" value="P:ventricular septum morphogenesis"/>
    <property type="evidence" value="ECO:0000316"/>
    <property type="project" value="MGI"/>
</dbReference>
<dbReference type="GO" id="GO:0021874">
    <property type="term" value="P:Wnt signaling pathway involved in forebrain neuroblast division"/>
    <property type="evidence" value="ECO:0000315"/>
    <property type="project" value="MGI"/>
</dbReference>
<dbReference type="GO" id="GO:0090244">
    <property type="term" value="P:Wnt signaling pathway involved in somitogenesis"/>
    <property type="evidence" value="ECO:0000315"/>
    <property type="project" value="MGI"/>
</dbReference>
<dbReference type="CDD" id="cd00112">
    <property type="entry name" value="LDLa"/>
    <property type="match status" value="3"/>
</dbReference>
<dbReference type="FunFam" id="2.10.25.10:FF:000381">
    <property type="entry name" value="Low-density lipoprotein receptor-related protein 6"/>
    <property type="match status" value="1"/>
</dbReference>
<dbReference type="FunFam" id="2.120.10.30:FF:000001">
    <property type="entry name" value="Low-density lipoprotein receptor-related protein 6"/>
    <property type="match status" value="2"/>
</dbReference>
<dbReference type="FunFam" id="2.120.10.30:FF:000017">
    <property type="entry name" value="Low-density lipoprotein receptor-related protein 6"/>
    <property type="match status" value="1"/>
</dbReference>
<dbReference type="FunFam" id="2.120.10.30:FF:000241">
    <property type="entry name" value="Low-density lipoprotein receptor-related protein 6"/>
    <property type="match status" value="1"/>
</dbReference>
<dbReference type="FunFam" id="4.10.400.10:FF:000016">
    <property type="entry name" value="Low-density lipoprotein receptor-related protein 6"/>
    <property type="match status" value="1"/>
</dbReference>
<dbReference type="FunFam" id="4.10.400.10:FF:000075">
    <property type="entry name" value="Low-density lipoprotein receptor-related protein 6"/>
    <property type="match status" value="1"/>
</dbReference>
<dbReference type="FunFam" id="4.10.400.10:FF:000074">
    <property type="entry name" value="low-density lipoprotein receptor-related protein 6"/>
    <property type="match status" value="1"/>
</dbReference>
<dbReference type="Gene3D" id="4.10.400.10">
    <property type="entry name" value="Low-density Lipoprotein Receptor"/>
    <property type="match status" value="3"/>
</dbReference>
<dbReference type="Gene3D" id="2.120.10.30">
    <property type="entry name" value="TolB, C-terminal domain"/>
    <property type="match status" value="4"/>
</dbReference>
<dbReference type="InterPro" id="IPR011042">
    <property type="entry name" value="6-blade_b-propeller_TolB-like"/>
</dbReference>
<dbReference type="InterPro" id="IPR050778">
    <property type="entry name" value="Cueball_EGF_LRP_Nidogen"/>
</dbReference>
<dbReference type="InterPro" id="IPR000742">
    <property type="entry name" value="EGF-like_dom"/>
</dbReference>
<dbReference type="InterPro" id="IPR036055">
    <property type="entry name" value="LDL_receptor-like_sf"/>
</dbReference>
<dbReference type="InterPro" id="IPR023415">
    <property type="entry name" value="LDLR_class-A_CS"/>
</dbReference>
<dbReference type="InterPro" id="IPR000033">
    <property type="entry name" value="LDLR_classB_rpt"/>
</dbReference>
<dbReference type="InterPro" id="IPR002172">
    <property type="entry name" value="LDrepeatLR_classA_rpt"/>
</dbReference>
<dbReference type="InterPro" id="IPR017049">
    <property type="entry name" value="LRP5/6"/>
</dbReference>
<dbReference type="PANTHER" id="PTHR46513:SF40">
    <property type="entry name" value="LOW-DENSITY LIPOPROTEIN RECEPTOR-RELATED PROTEIN 6"/>
    <property type="match status" value="1"/>
</dbReference>
<dbReference type="PANTHER" id="PTHR46513">
    <property type="entry name" value="VITELLOGENIN RECEPTOR-LIKE PROTEIN-RELATED-RELATED"/>
    <property type="match status" value="1"/>
</dbReference>
<dbReference type="Pfam" id="PF14670">
    <property type="entry name" value="FXa_inhibition"/>
    <property type="match status" value="4"/>
</dbReference>
<dbReference type="Pfam" id="PF00057">
    <property type="entry name" value="Ldl_recept_a"/>
    <property type="match status" value="3"/>
</dbReference>
<dbReference type="Pfam" id="PF00058">
    <property type="entry name" value="Ldl_recept_b"/>
    <property type="match status" value="12"/>
</dbReference>
<dbReference type="PIRSF" id="PIRSF036314">
    <property type="entry name" value="LDL_recpt-rel_p5/6"/>
    <property type="match status" value="1"/>
</dbReference>
<dbReference type="PRINTS" id="PR00261">
    <property type="entry name" value="LDLRECEPTOR"/>
</dbReference>
<dbReference type="SMART" id="SM00181">
    <property type="entry name" value="EGF"/>
    <property type="match status" value="4"/>
</dbReference>
<dbReference type="SMART" id="SM00192">
    <property type="entry name" value="LDLa"/>
    <property type="match status" value="3"/>
</dbReference>
<dbReference type="SMART" id="SM00135">
    <property type="entry name" value="LY"/>
    <property type="match status" value="20"/>
</dbReference>
<dbReference type="SUPFAM" id="SSF57196">
    <property type="entry name" value="EGF/Laminin"/>
    <property type="match status" value="4"/>
</dbReference>
<dbReference type="SUPFAM" id="SSF57424">
    <property type="entry name" value="LDL receptor-like module"/>
    <property type="match status" value="3"/>
</dbReference>
<dbReference type="SUPFAM" id="SSF63825">
    <property type="entry name" value="YWTD domain"/>
    <property type="match status" value="4"/>
</dbReference>
<dbReference type="PROSITE" id="PS01186">
    <property type="entry name" value="EGF_2"/>
    <property type="match status" value="1"/>
</dbReference>
<dbReference type="PROSITE" id="PS01209">
    <property type="entry name" value="LDLRA_1"/>
    <property type="match status" value="3"/>
</dbReference>
<dbReference type="PROSITE" id="PS50068">
    <property type="entry name" value="LDLRA_2"/>
    <property type="match status" value="3"/>
</dbReference>
<dbReference type="PROSITE" id="PS51120">
    <property type="entry name" value="LDLRB"/>
    <property type="match status" value="20"/>
</dbReference>
<sequence length="1613" mass="180255">MGAVLRSLLACSFCVLLRAAPLLLYANRRDLRLVDATNGKENATIVVGGLEDAAAVDFVFGHGLIYWSDVSEEAIKRTEFNKSESVQNVVVSGLLSPDGLACDWLGEKLYWTDSETNRIEVSNLDGSLRKVLFWQELDQPRAIALDPSSGFMYWTDWGEVPKIERAGMDGSSRFVIINTEIYWPNGLTLDYQERKLYWADAKLNFIHKSNLDGTNRQAVVKGSLPHPFALTLFEDTLYWTDWNTHSILACNKYTGEGLREIHSNIFSPMDIHAFSQQRQPNATNPCGIDNGGCSHLCLMSPVKPFYQCACPTGVKLMENGKTCKDGATELLLLARRTDLRRISLDTPDFTDIVLQLEDIRHAIAIDYDPVEGYIYWTDDEVRAIRRSFIDGSGSQFVVTAQIAHPDGIAVDWVARNLYWTDTGTDRIEVTRLNGTMRKILISEDLEEPRAIVLDPMVGYMYWTDWGEIPKIERAALDGSDRVVLVNTSLGWPNGLALDYDEGTIYWGDAKTDKIEVMNTDGTGRRVLVEDKIPHIFGFTLLGDYVYWTDWQRRSIERVHKRSAEREVIIDQLPDLMGLKATSVHRVIGSNPCAEDNGGCSHLCLYRPQGLRCACPIGFELIGDMKTCIVPEAFLLFSRRADIRRISLETNNNNVAIPLTGVKEASALDFDVTDNRIYWTDISLKTISRAFMNGSALEHVVEFGLDYPEGMAVDWLGKNLYWADTGTNRIEVSKLDGQHRQVLVWKDLDSPRALALDPAEGFMYWTEWGGKPKIDRAAMDGSERTTLVPNVGRANGLTIDYAKRRLYWTDLDTNLIESSDMLGLNREVIADDLPHPFGLTQYQDYIYWTDWSRRSIERANKTSGQNRTIIQGHLDYVMDILVFHSSRQAGWNECASSNGHCSHLCLAVPVGGFVCGCPAHYSLNADNRTCSAPSTFLLFSQKSAINRMVIDEQQSPDIILPIHSLRNVRAIDYDPLDKQLYWIDSRQNSIRKAHEDGGQGFNVVANSVANQNLEIQPYDLSIDIYSRYIYWTCEATNVIDVTRLDGRSVGVVLKGEQDRPRAIVVNPEKGYMYFTNLQERSPKIERAALDGTEREVLFFSGLSKPIALALDSKLGKLFWADSDLRRIESSDLSGANRIVLEDSNILQPVGLTVFENWLYWIDKQQQMIEKIDMTGREGRTKVQARIAQLSDIHAVKELNLQEYRQHPCAQDNGGCSHICLVKGDGTTRCSCPMHLVLLQDELSCGEPPTCSPQQFTCFTGDIDCIPVAWRCDGFTECEDHSDELNCPVCSESQFQCASGQCIDGALRCNGDANCQDKSDEKNCEVLCLIDQFRCANGQCVGKHKKCDHSVDCSDRSDELDCYPTEEPAPQATNTVGSVIGVIVTIFVSGTIYFICQRMLCPRMKGDGETMTNDYVVHSPASVPLGYVPHPSSLSGSLPGMSRGKSMISSLSIMGGSSGPPYDRAHVTGASSSSSSSTKGTYFPAILNPPPSPATERSHYTMEFGYSSNSPSTHRSYSYRPYSYRHFAPPTTPCSTDVCDSDYAPSRRMTSVATAKGYTSDVNYDSEPVPPPPTPRSQYLSAEENYESCPPSPYTERSYSHHLYPPPPSPCTDSS</sequence>